<name>PANB_SALAR</name>
<sequence>MKPTTIALLQKYKQEKKRFATITAYDYSFAKLFADEGLSVMLVGDSLGMTIQGHDSTLPVTVEDIAYHTRAVRRGAPNCLLLSDLPFMAYATPEQAFANAATMMRAGANMVKIEGGAWLVDTVKMLTERAVPVCAHLGLTPQSVNIFGGYKVQGRGDAGDQLLSDALALEGAGAQLLVLECVPVELAKRVTEALSIPVIGIGAGNVTDGQILVMHDAFGITGGHIPKFAKNFLSTAGDIRAAVRQYISEVASGVYPGEEHSFH</sequence>
<feature type="chain" id="PRO_1000076830" description="3-methyl-2-oxobutanoate hydroxymethyltransferase">
    <location>
        <begin position="1"/>
        <end position="263"/>
    </location>
</feature>
<feature type="active site" description="Proton acceptor" evidence="1">
    <location>
        <position position="180"/>
    </location>
</feature>
<feature type="binding site" evidence="1">
    <location>
        <begin position="45"/>
        <end position="46"/>
    </location>
    <ligand>
        <name>3-methyl-2-oxobutanoate</name>
        <dbReference type="ChEBI" id="CHEBI:11851"/>
    </ligand>
</feature>
<feature type="binding site" evidence="1">
    <location>
        <position position="45"/>
    </location>
    <ligand>
        <name>Mg(2+)</name>
        <dbReference type="ChEBI" id="CHEBI:18420"/>
    </ligand>
</feature>
<feature type="binding site" evidence="1">
    <location>
        <position position="84"/>
    </location>
    <ligand>
        <name>3-methyl-2-oxobutanoate</name>
        <dbReference type="ChEBI" id="CHEBI:11851"/>
    </ligand>
</feature>
<feature type="binding site" evidence="1">
    <location>
        <position position="84"/>
    </location>
    <ligand>
        <name>Mg(2+)</name>
        <dbReference type="ChEBI" id="CHEBI:18420"/>
    </ligand>
</feature>
<feature type="binding site" evidence="1">
    <location>
        <position position="112"/>
    </location>
    <ligand>
        <name>3-methyl-2-oxobutanoate</name>
        <dbReference type="ChEBI" id="CHEBI:11851"/>
    </ligand>
</feature>
<feature type="binding site" evidence="1">
    <location>
        <position position="114"/>
    </location>
    <ligand>
        <name>Mg(2+)</name>
        <dbReference type="ChEBI" id="CHEBI:18420"/>
    </ligand>
</feature>
<accession>A9MPM1</accession>
<organism>
    <name type="scientific">Salmonella arizonae (strain ATCC BAA-731 / CDC346-86 / RSK2980)</name>
    <dbReference type="NCBI Taxonomy" id="41514"/>
    <lineage>
        <taxon>Bacteria</taxon>
        <taxon>Pseudomonadati</taxon>
        <taxon>Pseudomonadota</taxon>
        <taxon>Gammaproteobacteria</taxon>
        <taxon>Enterobacterales</taxon>
        <taxon>Enterobacteriaceae</taxon>
        <taxon>Salmonella</taxon>
    </lineage>
</organism>
<protein>
    <recommendedName>
        <fullName evidence="1">3-methyl-2-oxobutanoate hydroxymethyltransferase</fullName>
        <ecNumber evidence="1">2.1.2.11</ecNumber>
    </recommendedName>
    <alternativeName>
        <fullName evidence="1">Ketopantoate hydroxymethyltransferase</fullName>
        <shortName evidence="1">KPHMT</shortName>
    </alternativeName>
</protein>
<evidence type="ECO:0000255" key="1">
    <source>
        <dbReference type="HAMAP-Rule" id="MF_00156"/>
    </source>
</evidence>
<proteinExistence type="inferred from homology"/>
<dbReference type="EC" id="2.1.2.11" evidence="1"/>
<dbReference type="EMBL" id="CP000880">
    <property type="protein sequence ID" value="ABX22664.1"/>
    <property type="molecule type" value="Genomic_DNA"/>
</dbReference>
<dbReference type="SMR" id="A9MPM1"/>
<dbReference type="STRING" id="41514.SARI_02816"/>
<dbReference type="KEGG" id="ses:SARI_02816"/>
<dbReference type="HOGENOM" id="CLU_036645_1_0_6"/>
<dbReference type="UniPathway" id="UPA00028">
    <property type="reaction ID" value="UER00003"/>
</dbReference>
<dbReference type="Proteomes" id="UP000002084">
    <property type="component" value="Chromosome"/>
</dbReference>
<dbReference type="GO" id="GO:0005737">
    <property type="term" value="C:cytoplasm"/>
    <property type="evidence" value="ECO:0007669"/>
    <property type="project" value="UniProtKB-SubCell"/>
</dbReference>
<dbReference type="GO" id="GO:0003864">
    <property type="term" value="F:3-methyl-2-oxobutanoate hydroxymethyltransferase activity"/>
    <property type="evidence" value="ECO:0007669"/>
    <property type="project" value="UniProtKB-UniRule"/>
</dbReference>
<dbReference type="GO" id="GO:0000287">
    <property type="term" value="F:magnesium ion binding"/>
    <property type="evidence" value="ECO:0007669"/>
    <property type="project" value="TreeGrafter"/>
</dbReference>
<dbReference type="GO" id="GO:0015940">
    <property type="term" value="P:pantothenate biosynthetic process"/>
    <property type="evidence" value="ECO:0007669"/>
    <property type="project" value="UniProtKB-UniRule"/>
</dbReference>
<dbReference type="CDD" id="cd06557">
    <property type="entry name" value="KPHMT-like"/>
    <property type="match status" value="1"/>
</dbReference>
<dbReference type="FunFam" id="3.20.20.60:FF:000003">
    <property type="entry name" value="3-methyl-2-oxobutanoate hydroxymethyltransferase"/>
    <property type="match status" value="1"/>
</dbReference>
<dbReference type="Gene3D" id="3.20.20.60">
    <property type="entry name" value="Phosphoenolpyruvate-binding domains"/>
    <property type="match status" value="1"/>
</dbReference>
<dbReference type="HAMAP" id="MF_00156">
    <property type="entry name" value="PanB"/>
    <property type="match status" value="1"/>
</dbReference>
<dbReference type="InterPro" id="IPR003700">
    <property type="entry name" value="Pantoate_hydroxy_MeTrfase"/>
</dbReference>
<dbReference type="InterPro" id="IPR015813">
    <property type="entry name" value="Pyrv/PenolPyrv_kinase-like_dom"/>
</dbReference>
<dbReference type="InterPro" id="IPR040442">
    <property type="entry name" value="Pyrv_kinase-like_dom_sf"/>
</dbReference>
<dbReference type="NCBIfam" id="TIGR00222">
    <property type="entry name" value="panB"/>
    <property type="match status" value="1"/>
</dbReference>
<dbReference type="NCBIfam" id="NF001452">
    <property type="entry name" value="PRK00311.1"/>
    <property type="match status" value="1"/>
</dbReference>
<dbReference type="PANTHER" id="PTHR20881">
    <property type="entry name" value="3-METHYL-2-OXOBUTANOATE HYDROXYMETHYLTRANSFERASE"/>
    <property type="match status" value="1"/>
</dbReference>
<dbReference type="PANTHER" id="PTHR20881:SF0">
    <property type="entry name" value="3-METHYL-2-OXOBUTANOATE HYDROXYMETHYLTRANSFERASE"/>
    <property type="match status" value="1"/>
</dbReference>
<dbReference type="Pfam" id="PF02548">
    <property type="entry name" value="Pantoate_transf"/>
    <property type="match status" value="1"/>
</dbReference>
<dbReference type="PIRSF" id="PIRSF000388">
    <property type="entry name" value="Pantoate_hydroxy_MeTrfase"/>
    <property type="match status" value="1"/>
</dbReference>
<dbReference type="SUPFAM" id="SSF51621">
    <property type="entry name" value="Phosphoenolpyruvate/pyruvate domain"/>
    <property type="match status" value="1"/>
</dbReference>
<keyword id="KW-0963">Cytoplasm</keyword>
<keyword id="KW-0460">Magnesium</keyword>
<keyword id="KW-0479">Metal-binding</keyword>
<keyword id="KW-0566">Pantothenate biosynthesis</keyword>
<keyword id="KW-1185">Reference proteome</keyword>
<keyword id="KW-0808">Transferase</keyword>
<reference key="1">
    <citation type="submission" date="2007-11" db="EMBL/GenBank/DDBJ databases">
        <authorList>
            <consortium name="The Salmonella enterica serovar Arizonae Genome Sequencing Project"/>
            <person name="McClelland M."/>
            <person name="Sanderson E.K."/>
            <person name="Porwollik S."/>
            <person name="Spieth J."/>
            <person name="Clifton W.S."/>
            <person name="Fulton R."/>
            <person name="Chunyan W."/>
            <person name="Wollam A."/>
            <person name="Shah N."/>
            <person name="Pepin K."/>
            <person name="Bhonagiri V."/>
            <person name="Nash W."/>
            <person name="Johnson M."/>
            <person name="Thiruvilangam P."/>
            <person name="Wilson R."/>
        </authorList>
    </citation>
    <scope>NUCLEOTIDE SEQUENCE [LARGE SCALE GENOMIC DNA]</scope>
    <source>
        <strain>ATCC BAA-731 / CDC346-86 / RSK2980</strain>
    </source>
</reference>
<comment type="function">
    <text evidence="1">Catalyzes the reversible reaction in which hydroxymethyl group from 5,10-methylenetetrahydrofolate is transferred onto alpha-ketoisovalerate to form ketopantoate.</text>
</comment>
<comment type="catalytic activity">
    <reaction evidence="1">
        <text>3-methyl-2-oxobutanoate + (6R)-5,10-methylene-5,6,7,8-tetrahydrofolate + H2O = 2-dehydropantoate + (6S)-5,6,7,8-tetrahydrofolate</text>
        <dbReference type="Rhea" id="RHEA:11824"/>
        <dbReference type="ChEBI" id="CHEBI:11561"/>
        <dbReference type="ChEBI" id="CHEBI:11851"/>
        <dbReference type="ChEBI" id="CHEBI:15377"/>
        <dbReference type="ChEBI" id="CHEBI:15636"/>
        <dbReference type="ChEBI" id="CHEBI:57453"/>
        <dbReference type="EC" id="2.1.2.11"/>
    </reaction>
</comment>
<comment type="cofactor">
    <cofactor evidence="1">
        <name>Mg(2+)</name>
        <dbReference type="ChEBI" id="CHEBI:18420"/>
    </cofactor>
    <text evidence="1">Binds 1 Mg(2+) ion per subunit.</text>
</comment>
<comment type="pathway">
    <text evidence="1">Cofactor biosynthesis; (R)-pantothenate biosynthesis; (R)-pantoate from 3-methyl-2-oxobutanoate: step 1/2.</text>
</comment>
<comment type="subunit">
    <text evidence="1">Homodecamer; pentamer of dimers.</text>
</comment>
<comment type="subcellular location">
    <subcellularLocation>
        <location evidence="1">Cytoplasm</location>
    </subcellularLocation>
</comment>
<comment type="similarity">
    <text evidence="1">Belongs to the PanB family.</text>
</comment>
<gene>
    <name evidence="1" type="primary">panB</name>
    <name type="ordered locus">SARI_02816</name>
</gene>